<dbReference type="EC" id="2.7.1.23" evidence="1"/>
<dbReference type="EMBL" id="AE008691">
    <property type="protein sequence ID" value="AAM24524.1"/>
    <property type="molecule type" value="Genomic_DNA"/>
</dbReference>
<dbReference type="RefSeq" id="WP_009610251.1">
    <property type="nucleotide sequence ID" value="NZ_JANUCV010000001.1"/>
</dbReference>
<dbReference type="SMR" id="Q8RAC3"/>
<dbReference type="STRING" id="273068.TTE1300"/>
<dbReference type="KEGG" id="tte:TTE1300"/>
<dbReference type="eggNOG" id="COG0061">
    <property type="taxonomic scope" value="Bacteria"/>
</dbReference>
<dbReference type="HOGENOM" id="CLU_008831_0_1_9"/>
<dbReference type="OrthoDB" id="9774737at2"/>
<dbReference type="Proteomes" id="UP000000555">
    <property type="component" value="Chromosome"/>
</dbReference>
<dbReference type="GO" id="GO:0005737">
    <property type="term" value="C:cytoplasm"/>
    <property type="evidence" value="ECO:0007669"/>
    <property type="project" value="UniProtKB-SubCell"/>
</dbReference>
<dbReference type="GO" id="GO:0005524">
    <property type="term" value="F:ATP binding"/>
    <property type="evidence" value="ECO:0007669"/>
    <property type="project" value="UniProtKB-KW"/>
</dbReference>
<dbReference type="GO" id="GO:0046872">
    <property type="term" value="F:metal ion binding"/>
    <property type="evidence" value="ECO:0007669"/>
    <property type="project" value="UniProtKB-UniRule"/>
</dbReference>
<dbReference type="GO" id="GO:0051287">
    <property type="term" value="F:NAD binding"/>
    <property type="evidence" value="ECO:0007669"/>
    <property type="project" value="UniProtKB-ARBA"/>
</dbReference>
<dbReference type="GO" id="GO:0003951">
    <property type="term" value="F:NAD+ kinase activity"/>
    <property type="evidence" value="ECO:0007669"/>
    <property type="project" value="UniProtKB-UniRule"/>
</dbReference>
<dbReference type="GO" id="GO:0019674">
    <property type="term" value="P:NAD metabolic process"/>
    <property type="evidence" value="ECO:0007669"/>
    <property type="project" value="InterPro"/>
</dbReference>
<dbReference type="GO" id="GO:0006741">
    <property type="term" value="P:NADP biosynthetic process"/>
    <property type="evidence" value="ECO:0007669"/>
    <property type="project" value="UniProtKB-UniRule"/>
</dbReference>
<dbReference type="FunFam" id="2.60.200.30:FF:000009">
    <property type="entry name" value="Poly(P)/ATP NAD kinase"/>
    <property type="match status" value="1"/>
</dbReference>
<dbReference type="Gene3D" id="3.40.50.10330">
    <property type="entry name" value="Probable inorganic polyphosphate/atp-NAD kinase, domain 1"/>
    <property type="match status" value="1"/>
</dbReference>
<dbReference type="Gene3D" id="2.60.200.30">
    <property type="entry name" value="Probable inorganic polyphosphate/atp-NAD kinase, domain 2"/>
    <property type="match status" value="1"/>
</dbReference>
<dbReference type="HAMAP" id="MF_00361">
    <property type="entry name" value="NAD_kinase"/>
    <property type="match status" value="1"/>
</dbReference>
<dbReference type="InterPro" id="IPR017438">
    <property type="entry name" value="ATP-NAD_kinase_N"/>
</dbReference>
<dbReference type="InterPro" id="IPR017437">
    <property type="entry name" value="ATP-NAD_kinase_PpnK-typ_C"/>
</dbReference>
<dbReference type="InterPro" id="IPR016064">
    <property type="entry name" value="NAD/diacylglycerol_kinase_sf"/>
</dbReference>
<dbReference type="InterPro" id="IPR002504">
    <property type="entry name" value="NADK"/>
</dbReference>
<dbReference type="PANTHER" id="PTHR20275">
    <property type="entry name" value="NAD KINASE"/>
    <property type="match status" value="1"/>
</dbReference>
<dbReference type="PANTHER" id="PTHR20275:SF0">
    <property type="entry name" value="NAD KINASE"/>
    <property type="match status" value="1"/>
</dbReference>
<dbReference type="Pfam" id="PF01513">
    <property type="entry name" value="NAD_kinase"/>
    <property type="match status" value="1"/>
</dbReference>
<dbReference type="Pfam" id="PF20143">
    <property type="entry name" value="NAD_kinase_C"/>
    <property type="match status" value="1"/>
</dbReference>
<dbReference type="SUPFAM" id="SSF111331">
    <property type="entry name" value="NAD kinase/diacylglycerol kinase-like"/>
    <property type="match status" value="1"/>
</dbReference>
<sequence>MKKVGVIPNINKDKDLEVTKSVVNWLLDHGSEPYLNEIVAARIGYEKHGKKANEIYSKSDFLIALGGDGTILNVARLCAPFGTPILAVNLGHLGFLTEIDASELFPSLEKIYKGEYAIEKRMMLEANVVKNDMEVINFRALNDIVITRGAFSRMARIKAYVNDNYVDTYLADGVIVATPTGSTAYSLSAGGPIVYPTVEVIIITPICPHTLYSRSIVVSPDDVIRLEIAEENQDLMITTDGQQGYKIDYRDVIYIKKSNEYTNLIKVKNSNFFDLLRDKLTER</sequence>
<reference key="1">
    <citation type="journal article" date="2002" name="Genome Res.">
        <title>A complete sequence of the T. tengcongensis genome.</title>
        <authorList>
            <person name="Bao Q."/>
            <person name="Tian Y."/>
            <person name="Li W."/>
            <person name="Xu Z."/>
            <person name="Xuan Z."/>
            <person name="Hu S."/>
            <person name="Dong W."/>
            <person name="Yang J."/>
            <person name="Chen Y."/>
            <person name="Xue Y."/>
            <person name="Xu Y."/>
            <person name="Lai X."/>
            <person name="Huang L."/>
            <person name="Dong X."/>
            <person name="Ma Y."/>
            <person name="Ling L."/>
            <person name="Tan H."/>
            <person name="Chen R."/>
            <person name="Wang J."/>
            <person name="Yu J."/>
            <person name="Yang H."/>
        </authorList>
    </citation>
    <scope>NUCLEOTIDE SEQUENCE [LARGE SCALE GENOMIC DNA]</scope>
    <source>
        <strain>DSM 15242 / JCM 11007 / NBRC 100824 / MB4</strain>
    </source>
</reference>
<gene>
    <name evidence="1" type="primary">nadK</name>
    <name type="ordered locus">TTE1300</name>
</gene>
<comment type="function">
    <text evidence="1">Involved in the regulation of the intracellular balance of NAD and NADP, and is a key enzyme in the biosynthesis of NADP. Catalyzes specifically the phosphorylation on 2'-hydroxyl of the adenosine moiety of NAD to yield NADP.</text>
</comment>
<comment type="catalytic activity">
    <reaction evidence="1">
        <text>NAD(+) + ATP = ADP + NADP(+) + H(+)</text>
        <dbReference type="Rhea" id="RHEA:18629"/>
        <dbReference type="ChEBI" id="CHEBI:15378"/>
        <dbReference type="ChEBI" id="CHEBI:30616"/>
        <dbReference type="ChEBI" id="CHEBI:57540"/>
        <dbReference type="ChEBI" id="CHEBI:58349"/>
        <dbReference type="ChEBI" id="CHEBI:456216"/>
        <dbReference type="EC" id="2.7.1.23"/>
    </reaction>
</comment>
<comment type="cofactor">
    <cofactor evidence="1">
        <name>a divalent metal cation</name>
        <dbReference type="ChEBI" id="CHEBI:60240"/>
    </cofactor>
</comment>
<comment type="subcellular location">
    <subcellularLocation>
        <location evidence="1">Cytoplasm</location>
    </subcellularLocation>
</comment>
<comment type="similarity">
    <text evidence="1">Belongs to the NAD kinase family.</text>
</comment>
<evidence type="ECO:0000255" key="1">
    <source>
        <dbReference type="HAMAP-Rule" id="MF_00361"/>
    </source>
</evidence>
<accession>Q8RAC3</accession>
<feature type="chain" id="PRO_0000120681" description="NAD kinase">
    <location>
        <begin position="1"/>
        <end position="283"/>
    </location>
</feature>
<feature type="active site" description="Proton acceptor" evidence="1">
    <location>
        <position position="68"/>
    </location>
</feature>
<feature type="binding site" evidence="1">
    <location>
        <begin position="68"/>
        <end position="69"/>
    </location>
    <ligand>
        <name>NAD(+)</name>
        <dbReference type="ChEBI" id="CHEBI:57540"/>
    </ligand>
</feature>
<feature type="binding site" evidence="1">
    <location>
        <begin position="142"/>
        <end position="143"/>
    </location>
    <ligand>
        <name>NAD(+)</name>
        <dbReference type="ChEBI" id="CHEBI:57540"/>
    </ligand>
</feature>
<feature type="binding site" evidence="1">
    <location>
        <position position="153"/>
    </location>
    <ligand>
        <name>NAD(+)</name>
        <dbReference type="ChEBI" id="CHEBI:57540"/>
    </ligand>
</feature>
<feature type="binding site" evidence="1">
    <location>
        <position position="172"/>
    </location>
    <ligand>
        <name>NAD(+)</name>
        <dbReference type="ChEBI" id="CHEBI:57540"/>
    </ligand>
</feature>
<feature type="binding site" evidence="1">
    <location>
        <begin position="183"/>
        <end position="188"/>
    </location>
    <ligand>
        <name>NAD(+)</name>
        <dbReference type="ChEBI" id="CHEBI:57540"/>
    </ligand>
</feature>
<feature type="binding site" evidence="1">
    <location>
        <position position="242"/>
    </location>
    <ligand>
        <name>NAD(+)</name>
        <dbReference type="ChEBI" id="CHEBI:57540"/>
    </ligand>
</feature>
<organism>
    <name type="scientific">Caldanaerobacter subterraneus subsp. tengcongensis (strain DSM 15242 / JCM 11007 / NBRC 100824 / MB4)</name>
    <name type="common">Thermoanaerobacter tengcongensis</name>
    <dbReference type="NCBI Taxonomy" id="273068"/>
    <lineage>
        <taxon>Bacteria</taxon>
        <taxon>Bacillati</taxon>
        <taxon>Bacillota</taxon>
        <taxon>Clostridia</taxon>
        <taxon>Thermoanaerobacterales</taxon>
        <taxon>Thermoanaerobacteraceae</taxon>
        <taxon>Caldanaerobacter</taxon>
    </lineage>
</organism>
<proteinExistence type="inferred from homology"/>
<keyword id="KW-0067">ATP-binding</keyword>
<keyword id="KW-0963">Cytoplasm</keyword>
<keyword id="KW-0418">Kinase</keyword>
<keyword id="KW-0520">NAD</keyword>
<keyword id="KW-0521">NADP</keyword>
<keyword id="KW-0547">Nucleotide-binding</keyword>
<keyword id="KW-1185">Reference proteome</keyword>
<keyword id="KW-0808">Transferase</keyword>
<name>NADK_CALS4</name>
<protein>
    <recommendedName>
        <fullName evidence="1">NAD kinase</fullName>
        <ecNumber evidence="1">2.7.1.23</ecNumber>
    </recommendedName>
    <alternativeName>
        <fullName evidence="1">ATP-dependent NAD kinase</fullName>
    </alternativeName>
</protein>